<comment type="function">
    <text evidence="4 5">Spider venom toxin that exhibits cytolytic activity by forming an alpha-helix across the membrane (PubMed:20657014). Lethal to insect larvae (PubMed:20657014, PubMed:24717175). Causes instant paralysis and death in the larvae of the flesh fly (S.carnaria) at doses of 20 ug/g, at doses of less than 10 ug/g causes reversible paralysis (PubMed:20657014). Has cytolytic activity against insect Sf9 cells (PubMed:20657014). Causes stable and irreversible depolarization of fly muscle fibers, leading to contracture at higher toxin concentrations (PubMed:20657014). Destabilizes membranes (PubMed:20657014).</text>
</comment>
<comment type="subcellular location">
    <subcellularLocation>
        <location evidence="4">Secreted</location>
    </subcellularLocation>
    <subcellularLocation>
        <location evidence="4">Target cell membrane</location>
    </subcellularLocation>
    <text>Probably forms a transmembrane alpha-helix in the target cell membrane.</text>
</comment>
<comment type="tissue specificity">
    <text evidence="4">Expressed by the venom gland.</text>
</comment>
<comment type="domain">
    <text evidence="1">The presence of 'disulfide through disulfide knots' structurally defines this protein as a knottin. This toxin contains 2 'disulfide through disulfide knots' (By similarity).</text>
</comment>
<comment type="PTM">
    <text evidence="6 7">Cleavage of the propeptide depends on the processing quadruplet motif (XXXR, with at least one of X being E).</text>
</comment>
<comment type="toxic dose">
    <text evidence="4">LD(50) is 10 ug/g on S.carnaria larvae.</text>
</comment>
<comment type="similarity">
    <text evidence="8">Belongs to the neurotoxin 19 (CSTX) family. Double-CSTX subfamily.</text>
</comment>
<comment type="caution">
    <text evidence="9">Characterization of function and toxicity was performed using CpTx1, a mixture of DELTA-miturgitoxin-Cp1a, DELTA-miturgitoxin-Cp1b and DELTA-miturgitoxin-Cp1c. While it is assumed that all three are active current data cannot prove this.</text>
</comment>
<feature type="signal peptide" evidence="3">
    <location>
        <begin position="1"/>
        <end position="20"/>
    </location>
</feature>
<feature type="propeptide" id="PRO_0000440156" evidence="3 4">
    <location>
        <begin position="21"/>
        <end position="47"/>
    </location>
</feature>
<feature type="chain" id="PRO_0000440157" description="DELTA-miturgitoxin-Cp1c" evidence="4">
    <location>
        <begin position="48"/>
        <end position="181"/>
    </location>
</feature>
<feature type="region of interest" description="Predicted alpha-helix">
    <location>
        <begin position="164"/>
        <end position="177"/>
    </location>
</feature>
<feature type="short sequence motif" description="Processing quadruplet motif" evidence="6 7">
    <location>
        <begin position="44"/>
        <end position="47"/>
    </location>
</feature>
<feature type="modified residue" description="Tryptophan amide" evidence="4">
    <location>
        <position position="181"/>
    </location>
</feature>
<feature type="disulfide bond" evidence="2">
    <location>
        <begin position="51"/>
        <end position="66"/>
    </location>
</feature>
<feature type="disulfide bond" evidence="2">
    <location>
        <begin position="58"/>
        <end position="75"/>
    </location>
</feature>
<feature type="disulfide bond" evidence="2">
    <location>
        <begin position="65"/>
        <end position="88"/>
    </location>
</feature>
<feature type="disulfide bond" evidence="2">
    <location>
        <begin position="77"/>
        <end position="86"/>
    </location>
</feature>
<feature type="disulfide bond" evidence="2">
    <location>
        <begin position="115"/>
        <end position="130"/>
    </location>
</feature>
<feature type="disulfide bond" evidence="2">
    <location>
        <begin position="122"/>
        <end position="139"/>
    </location>
</feature>
<feature type="disulfide bond" evidence="2">
    <location>
        <begin position="129"/>
        <end position="157"/>
    </location>
</feature>
<feature type="disulfide bond" evidence="2">
    <location>
        <begin position="141"/>
        <end position="155"/>
    </location>
</feature>
<accession>C0HKG9</accession>
<accession>D5GSJ8</accession>
<accession>D5GSJ9</accession>
<accession>D7FBA1</accession>
<accession>D7FBA3</accession>
<accession>P86381</accession>
<accession>P86429</accession>
<accession>P86430</accession>
<organism>
    <name type="scientific">Cheiracanthium punctorium</name>
    <name type="common">Yellow sac spider</name>
    <name type="synonym">Aranea punctoria</name>
    <dbReference type="NCBI Taxonomy" id="682790"/>
    <lineage>
        <taxon>Eukaryota</taxon>
        <taxon>Metazoa</taxon>
        <taxon>Ecdysozoa</taxon>
        <taxon>Arthropoda</taxon>
        <taxon>Chelicerata</taxon>
        <taxon>Arachnida</taxon>
        <taxon>Araneae</taxon>
        <taxon>Araneomorphae</taxon>
        <taxon>Entelegynae</taxon>
        <taxon>Entelegynae incertae sedis</taxon>
        <taxon>Cheiracanthiidae</taxon>
        <taxon>Cheiracanthium</taxon>
    </lineage>
</organism>
<dbReference type="EMBL" id="FN594517">
    <property type="protein sequence ID" value="CBH50811.1"/>
    <property type="molecule type" value="mRNA"/>
</dbReference>
<dbReference type="SMR" id="C0HKG9"/>
<dbReference type="GO" id="GO:0005576">
    <property type="term" value="C:extracellular region"/>
    <property type="evidence" value="ECO:0007669"/>
    <property type="project" value="UniProtKB-SubCell"/>
</dbReference>
<dbReference type="GO" id="GO:0016020">
    <property type="term" value="C:membrane"/>
    <property type="evidence" value="ECO:0007669"/>
    <property type="project" value="UniProtKB-KW"/>
</dbReference>
<dbReference type="GO" id="GO:0044218">
    <property type="term" value="C:other organism cell membrane"/>
    <property type="evidence" value="ECO:0007669"/>
    <property type="project" value="UniProtKB-KW"/>
</dbReference>
<dbReference type="GO" id="GO:0090729">
    <property type="term" value="F:toxin activity"/>
    <property type="evidence" value="ECO:0007669"/>
    <property type="project" value="UniProtKB-KW"/>
</dbReference>
<dbReference type="GO" id="GO:0031640">
    <property type="term" value="P:killing of cells of another organism"/>
    <property type="evidence" value="ECO:0007669"/>
    <property type="project" value="UniProtKB-KW"/>
</dbReference>
<dbReference type="InterPro" id="IPR019553">
    <property type="entry name" value="Spider_toxin_CSTX_knottin"/>
</dbReference>
<dbReference type="InterPro" id="IPR011142">
    <property type="entry name" value="Spider_toxin_CSTX_Knottin_CS"/>
</dbReference>
<dbReference type="Pfam" id="PF10530">
    <property type="entry name" value="Toxin_35"/>
    <property type="match status" value="2"/>
</dbReference>
<dbReference type="PROSITE" id="PS60029">
    <property type="entry name" value="SPIDER_CSTX"/>
    <property type="match status" value="2"/>
</dbReference>
<name>TX1C_CHEPU</name>
<evidence type="ECO:0000250" key="1"/>
<evidence type="ECO:0000250" key="2">
    <source>
        <dbReference type="UniProtKB" id="P58604"/>
    </source>
</evidence>
<evidence type="ECO:0000255" key="3"/>
<evidence type="ECO:0000269" key="4">
    <source>
    </source>
</evidence>
<evidence type="ECO:0000269" key="5">
    <source>
    </source>
</evidence>
<evidence type="ECO:0000303" key="6">
    <source>
    </source>
</evidence>
<evidence type="ECO:0000303" key="7">
    <source>
    </source>
</evidence>
<evidence type="ECO:0000305" key="8"/>
<evidence type="ECO:0000305" key="9">
    <source>
    </source>
</evidence>
<evidence type="ECO:0000312" key="10">
    <source>
        <dbReference type="EMBL" id="CBH50811.1"/>
    </source>
</evidence>
<proteinExistence type="evidence at protein level"/>
<reference evidence="8 10" key="1">
    <citation type="journal article" date="2010" name="J. Biol. Chem.">
        <title>Novel class of spider toxin: active principle from the yellow sac spider Cheiracanthium punctorium venom is a unique two-domain polypeptide.</title>
        <authorList>
            <person name="Vassilevski A.A."/>
            <person name="Fedorova I.M."/>
            <person name="Maleeva E.E."/>
            <person name="Korolkova Y.V."/>
            <person name="Efimova S.S."/>
            <person name="Samsonova O.V."/>
            <person name="Schagina L.V."/>
            <person name="Feofanov A.V."/>
            <person name="Magazanik L.G."/>
            <person name="Grishin E.V."/>
        </authorList>
    </citation>
    <scope>NUCLEOTIDE SEQUENCE [MRNA]</scope>
    <scope>PROTEIN SEQUENCE OF 48-181</scope>
    <scope>FUNCTION</scope>
    <scope>SUBCELLULAR LOCATION</scope>
    <scope>TISSUE SPECIFICITY</scope>
    <scope>TOXIC DOSE</scope>
    <scope>PQM MOTIF</scope>
    <scope>AMIDATION AT TRP-181</scope>
    <source>
        <tissue evidence="4">Venom</tissue>
        <tissue evidence="10">Venom gland</tissue>
    </source>
</reference>
<reference key="2">
    <citation type="journal article" date="2012" name="J. Biol. Chem.">
        <title>A venom-derived neurotoxin, CsTx-1, from the spider Cupiennius salei exhibits cytolytic activities.</title>
        <authorList>
            <person name="Kuhn-Nentwig L."/>
            <person name="Fedorova I.M."/>
            <person name="Luscher B.P."/>
            <person name="Kopp L.S."/>
            <person name="Trachsel C."/>
            <person name="Schaller J."/>
            <person name="Vu X.L."/>
            <person name="Seebeck T."/>
            <person name="Streitberger K."/>
            <person name="Nentwig W."/>
            <person name="Sigel E."/>
            <person name="Magazanik L.G."/>
        </authorList>
    </citation>
    <scope>ALPHA-HELICAL REGION</scope>
</reference>
<reference evidence="8" key="3">
    <citation type="journal article" date="2014" name="Insect Mol. Biol.">
        <title>Structure of the yellow sac spider Cheiracanthium punctorium genes provides clues to evolution of insecticidal two-domain knottin toxins.</title>
        <authorList>
            <person name="Sachkova M.Y."/>
            <person name="Slavokhotova A.A."/>
            <person name="Grishin E.V."/>
            <person name="Vassilevski A.A."/>
        </authorList>
    </citation>
    <scope>PROTEIN SEQUENCE OF 48-67</scope>
    <scope>IDENTIFICATION BY MASS SPECTROMETRY</scope>
    <scope>PQM MOTIF</scope>
    <source>
        <tissue evidence="7">Venom</tissue>
    </source>
</reference>
<keyword id="KW-0027">Amidation</keyword>
<keyword id="KW-0204">Cytolysis</keyword>
<keyword id="KW-0903">Direct protein sequencing</keyword>
<keyword id="KW-1015">Disulfide bond</keyword>
<keyword id="KW-0960">Knottin</keyword>
<keyword id="KW-0472">Membrane</keyword>
<keyword id="KW-0528">Neurotoxin</keyword>
<keyword id="KW-0964">Secreted</keyword>
<keyword id="KW-0732">Signal</keyword>
<keyword id="KW-1052">Target cell membrane</keyword>
<keyword id="KW-1053">Target membrane</keyword>
<keyword id="KW-0800">Toxin</keyword>
<keyword id="KW-0812">Transmembrane</keyword>
<protein>
    <recommendedName>
        <fullName evidence="8">DELTA-miturgitoxin-Cp1c</fullName>
        <shortName evidence="8">DELTA-MGTX-Cp1c</shortName>
    </recommendedName>
    <alternativeName>
        <fullName evidence="6">Toxin CpTx1</fullName>
    </alternativeName>
    <alternativeName>
        <fullName evidence="6 10">Toxin CpTx1c</fullName>
    </alternativeName>
</protein>
<sequence>MKFSLFFSVFFLAVLHACLSESEIDLEDEEHFMSSDSFLSEIQDESRGKTCIERNKECTNDRHGCCRGKIFKDKCTCVKSGKTEKCVCTQKKWAKIIESYIGDIPALPKPVDDKCVPKHADCSKRKDDCCKGGIFKYQCKCYDMYDDDGEKTDLCGCVSPVEHQAIEGALRIAKKLIGDRWGR</sequence>